<evidence type="ECO:0000255" key="1">
    <source>
        <dbReference type="HAMAP-Rule" id="MF_00268"/>
    </source>
</evidence>
<gene>
    <name evidence="1" type="primary">recA</name>
    <name type="ordered locus">BAbS19_I11400</name>
</gene>
<comment type="function">
    <text evidence="1">Can catalyze the hydrolysis of ATP in the presence of single-stranded DNA, the ATP-dependent uptake of single-stranded DNA by duplex DNA, and the ATP-dependent hybridization of homologous single-stranded DNAs. It interacts with LexA causing its activation and leading to its autocatalytic cleavage.</text>
</comment>
<comment type="subcellular location">
    <subcellularLocation>
        <location evidence="1">Cytoplasm</location>
    </subcellularLocation>
</comment>
<comment type="similarity">
    <text evidence="1">Belongs to the RecA family.</text>
</comment>
<accession>B2S648</accession>
<feature type="chain" id="PRO_1000114317" description="Protein RecA">
    <location>
        <begin position="1"/>
        <end position="361"/>
    </location>
</feature>
<feature type="binding site" evidence="1">
    <location>
        <begin position="77"/>
        <end position="84"/>
    </location>
    <ligand>
        <name>ATP</name>
        <dbReference type="ChEBI" id="CHEBI:30616"/>
    </ligand>
</feature>
<protein>
    <recommendedName>
        <fullName evidence="1">Protein RecA</fullName>
    </recommendedName>
    <alternativeName>
        <fullName evidence="1">Recombinase A</fullName>
    </alternativeName>
</protein>
<keyword id="KW-0067">ATP-binding</keyword>
<keyword id="KW-0963">Cytoplasm</keyword>
<keyword id="KW-0227">DNA damage</keyword>
<keyword id="KW-0233">DNA recombination</keyword>
<keyword id="KW-0234">DNA repair</keyword>
<keyword id="KW-0238">DNA-binding</keyword>
<keyword id="KW-0547">Nucleotide-binding</keyword>
<keyword id="KW-0742">SOS response</keyword>
<organism>
    <name type="scientific">Brucella abortus (strain S19)</name>
    <dbReference type="NCBI Taxonomy" id="430066"/>
    <lineage>
        <taxon>Bacteria</taxon>
        <taxon>Pseudomonadati</taxon>
        <taxon>Pseudomonadota</taxon>
        <taxon>Alphaproteobacteria</taxon>
        <taxon>Hyphomicrobiales</taxon>
        <taxon>Brucellaceae</taxon>
        <taxon>Brucella/Ochrobactrum group</taxon>
        <taxon>Brucella</taxon>
    </lineage>
</organism>
<name>RECA_BRUA1</name>
<reference key="1">
    <citation type="journal article" date="2008" name="PLoS ONE">
        <title>Genome sequence of Brucella abortus vaccine strain S19 compared to virulent strains yields candidate virulence genes.</title>
        <authorList>
            <person name="Crasta O.R."/>
            <person name="Folkerts O."/>
            <person name="Fei Z."/>
            <person name="Mane S.P."/>
            <person name="Evans C."/>
            <person name="Martino-Catt S."/>
            <person name="Bricker B."/>
            <person name="Yu G."/>
            <person name="Du L."/>
            <person name="Sobral B.W."/>
        </authorList>
    </citation>
    <scope>NUCLEOTIDE SEQUENCE [LARGE SCALE GENOMIC DNA]</scope>
    <source>
        <strain>S19</strain>
    </source>
</reference>
<sequence length="361" mass="38735">MSQNSLRLVEDNSVDKTKALDAALSQIERAFGKGSIMRLGQNDQVVEIETVSTGSLSLDIALGVGGLPKGRIVEIYGPESSGKTTLALHTIAEAQKKGGICAFVDAEHALDPVYARKLGVDLENLLISQPDTGEQALEITDTLVRSGAIDVLVVDSVAALTPRAEIEGEMGDSLPGLQARLMSQALRKLTGSISRSNCMVIFINQIRMKIGVMFGSPETTTGGNALKFYASVRLDIRRIGSIKERDEVVGNQTRVKVVKNKLAPPFKQVEFDIMYGAGVSKVGELVDLGVKAGVVEKSGAWFSYNSQRLGQGRENAKQYLKDNPEVAREIETTLRQNAGLIAEQFLDDGGPEEDAAGAAEM</sequence>
<proteinExistence type="inferred from homology"/>
<dbReference type="EMBL" id="CP000887">
    <property type="protein sequence ID" value="ACD72645.1"/>
    <property type="molecule type" value="Genomic_DNA"/>
</dbReference>
<dbReference type="RefSeq" id="WP_002964332.1">
    <property type="nucleotide sequence ID" value="NC_010742.1"/>
</dbReference>
<dbReference type="SMR" id="B2S648"/>
<dbReference type="GeneID" id="97533554"/>
<dbReference type="KEGG" id="bmc:BAbS19_I11400"/>
<dbReference type="HOGENOM" id="CLU_040469_3_2_5"/>
<dbReference type="Proteomes" id="UP000002565">
    <property type="component" value="Chromosome 1"/>
</dbReference>
<dbReference type="GO" id="GO:0005829">
    <property type="term" value="C:cytosol"/>
    <property type="evidence" value="ECO:0007669"/>
    <property type="project" value="TreeGrafter"/>
</dbReference>
<dbReference type="GO" id="GO:0005524">
    <property type="term" value="F:ATP binding"/>
    <property type="evidence" value="ECO:0007669"/>
    <property type="project" value="UniProtKB-UniRule"/>
</dbReference>
<dbReference type="GO" id="GO:0016887">
    <property type="term" value="F:ATP hydrolysis activity"/>
    <property type="evidence" value="ECO:0007669"/>
    <property type="project" value="InterPro"/>
</dbReference>
<dbReference type="GO" id="GO:0140664">
    <property type="term" value="F:ATP-dependent DNA damage sensor activity"/>
    <property type="evidence" value="ECO:0007669"/>
    <property type="project" value="InterPro"/>
</dbReference>
<dbReference type="GO" id="GO:0003684">
    <property type="term" value="F:damaged DNA binding"/>
    <property type="evidence" value="ECO:0007669"/>
    <property type="project" value="UniProtKB-UniRule"/>
</dbReference>
<dbReference type="GO" id="GO:0003697">
    <property type="term" value="F:single-stranded DNA binding"/>
    <property type="evidence" value="ECO:0007669"/>
    <property type="project" value="UniProtKB-UniRule"/>
</dbReference>
<dbReference type="GO" id="GO:0006310">
    <property type="term" value="P:DNA recombination"/>
    <property type="evidence" value="ECO:0007669"/>
    <property type="project" value="UniProtKB-UniRule"/>
</dbReference>
<dbReference type="GO" id="GO:0006281">
    <property type="term" value="P:DNA repair"/>
    <property type="evidence" value="ECO:0007669"/>
    <property type="project" value="UniProtKB-UniRule"/>
</dbReference>
<dbReference type="GO" id="GO:0009432">
    <property type="term" value="P:SOS response"/>
    <property type="evidence" value="ECO:0007669"/>
    <property type="project" value="UniProtKB-UniRule"/>
</dbReference>
<dbReference type="CDD" id="cd00983">
    <property type="entry name" value="RecA"/>
    <property type="match status" value="1"/>
</dbReference>
<dbReference type="FunFam" id="3.40.50.300:FF:000087">
    <property type="entry name" value="Recombinase RecA"/>
    <property type="match status" value="1"/>
</dbReference>
<dbReference type="Gene3D" id="3.40.50.300">
    <property type="entry name" value="P-loop containing nucleotide triphosphate hydrolases"/>
    <property type="match status" value="1"/>
</dbReference>
<dbReference type="HAMAP" id="MF_00268">
    <property type="entry name" value="RecA"/>
    <property type="match status" value="1"/>
</dbReference>
<dbReference type="InterPro" id="IPR003593">
    <property type="entry name" value="AAA+_ATPase"/>
</dbReference>
<dbReference type="InterPro" id="IPR013765">
    <property type="entry name" value="DNA_recomb/repair_RecA"/>
</dbReference>
<dbReference type="InterPro" id="IPR020584">
    <property type="entry name" value="DNA_recomb/repair_RecA_CS"/>
</dbReference>
<dbReference type="InterPro" id="IPR027417">
    <property type="entry name" value="P-loop_NTPase"/>
</dbReference>
<dbReference type="InterPro" id="IPR049261">
    <property type="entry name" value="RecA-like_C"/>
</dbReference>
<dbReference type="InterPro" id="IPR049428">
    <property type="entry name" value="RecA-like_N"/>
</dbReference>
<dbReference type="InterPro" id="IPR020588">
    <property type="entry name" value="RecA_ATP-bd"/>
</dbReference>
<dbReference type="InterPro" id="IPR023400">
    <property type="entry name" value="RecA_C_sf"/>
</dbReference>
<dbReference type="InterPro" id="IPR020587">
    <property type="entry name" value="RecA_monomer-monomer_interface"/>
</dbReference>
<dbReference type="NCBIfam" id="TIGR02012">
    <property type="entry name" value="tigrfam_recA"/>
    <property type="match status" value="1"/>
</dbReference>
<dbReference type="PANTHER" id="PTHR45900:SF1">
    <property type="entry name" value="MITOCHONDRIAL DNA REPAIR PROTEIN RECA HOMOLOG-RELATED"/>
    <property type="match status" value="1"/>
</dbReference>
<dbReference type="PANTHER" id="PTHR45900">
    <property type="entry name" value="RECA"/>
    <property type="match status" value="1"/>
</dbReference>
<dbReference type="Pfam" id="PF00154">
    <property type="entry name" value="RecA"/>
    <property type="match status" value="1"/>
</dbReference>
<dbReference type="Pfam" id="PF21096">
    <property type="entry name" value="RecA_C"/>
    <property type="match status" value="1"/>
</dbReference>
<dbReference type="PRINTS" id="PR00142">
    <property type="entry name" value="RECA"/>
</dbReference>
<dbReference type="SMART" id="SM00382">
    <property type="entry name" value="AAA"/>
    <property type="match status" value="1"/>
</dbReference>
<dbReference type="SUPFAM" id="SSF52540">
    <property type="entry name" value="P-loop containing nucleoside triphosphate hydrolases"/>
    <property type="match status" value="1"/>
</dbReference>
<dbReference type="SUPFAM" id="SSF54752">
    <property type="entry name" value="RecA protein, C-terminal domain"/>
    <property type="match status" value="1"/>
</dbReference>
<dbReference type="PROSITE" id="PS00321">
    <property type="entry name" value="RECA_1"/>
    <property type="match status" value="1"/>
</dbReference>
<dbReference type="PROSITE" id="PS50162">
    <property type="entry name" value="RECA_2"/>
    <property type="match status" value="1"/>
</dbReference>
<dbReference type="PROSITE" id="PS50163">
    <property type="entry name" value="RECA_3"/>
    <property type="match status" value="1"/>
</dbReference>